<sequence length="1217" mass="135725">MIDVNKFESMQIGLASPNKIRSWSYGEVKKPETINYRTLKPEKDGLFDERIFGPTKDWSCACGKYKGVRYRGIVCDRCGVEVTSSKVRRERMGHIELAAPVTHIWYFKGIPSRMGLVLDISPKLLEEVIYFAAYIVIDPGDTDLEPKQLLTEAEYREQKAKYGNRFEAKMGAEAIRELLKKVDLDKEVKDLKKELQTATGQKRTRAIRRLDILDTFKNSGNKPEWMVMDAVPVIPPDLRPMVQLEGGRFATSDLNDLYRRVINRNNRLKRLLDLNAPNIIVQNEKRMLQEAVDALIDNGRRGRPVVGPGNRPLKSLSHMLKGKQGRFRQNLLGKRVDYSGRSVIDVSPKLKFYQCGVPRPMALELFKPFVMHELVKRGIASNIKNAKRKIDSEDDDIWDVLEDVIKERPVLLNRAPTLHRLSIQAFEPVLVPGKSIRLHPLACEAYNADFDGDQMAIHVPLSDEAVAESRLLMLAAHHILAPKDGKPIVTPSQDIVLGNYWLTQAERGREGEGMIFSSPAEATVAYENGDIHYHTIIGMSADAMPKKPWPQGHEHGIFITTYGKLVFNQLFPDDYFYINEPTEENLNNPLDAKYFLGEGQDIHDKIDEVGDDLIATPFKSSFLSDSIATIYKYYKVQRTSEYLDDLKKLGYTSSTTSGITIGMNDVPEIKDKDEKVAKARKQVDIVSKQFRRGLITEQERHDRVISIWNACKDEIQNEIAQIHSPRNPISIMADSGARGNISNFTQLAGMRGLMATPNGGLFEIPVTSNFKEGLSVLELFMSTHGARKGMTDTALKTAQSGYLTRRLVDVAQDVIIRDDDCGTDRGITVSAIMEGDEMIEPLFDRLVGRFTAETVKDPKTGEAIVGRDVMMDENMAHKICDAGVTHVKIRSILTCDTPHGVCRKCYGMNLATGEEVEVGEAVGTVAAQSIGEPGTQLTLRTFHNGGVAGAEDITQGLPRVQELFEARNPKGRATISEVDGVIDSIQENPADHTREITVKGKIDTRSYSVPYTASVAVSEGDYVHRGDKLTLGSVDPKELIQVTDTLTTEKYILAEVQKAYRMQGVDIADKHVEVLTRQMLQKVRVLDPGETDILPGEVMDIGQFRDRNKEVIISGGIPATAQSVILGITKAALETNSFLSAASFQETTRVLTDASIRGKNDPLLGLKENVIIGKIIPAGTGMPVYRNMEPEADVKKPDSVYSIGDIEKQMKEKEQSK</sequence>
<gene>
    <name evidence="1" type="primary">rpoC</name>
    <name type="ordered locus">lhv_0303</name>
</gene>
<organism>
    <name type="scientific">Lactobacillus helveticus (strain DPC 4571)</name>
    <dbReference type="NCBI Taxonomy" id="405566"/>
    <lineage>
        <taxon>Bacteria</taxon>
        <taxon>Bacillati</taxon>
        <taxon>Bacillota</taxon>
        <taxon>Bacilli</taxon>
        <taxon>Lactobacillales</taxon>
        <taxon>Lactobacillaceae</taxon>
        <taxon>Lactobacillus</taxon>
    </lineage>
</organism>
<proteinExistence type="inferred from homology"/>
<name>RPOC_LACH4</name>
<protein>
    <recommendedName>
        <fullName evidence="1">DNA-directed RNA polymerase subunit beta'</fullName>
        <shortName evidence="1">RNAP subunit beta'</shortName>
        <ecNumber evidence="1">2.7.7.6</ecNumber>
    </recommendedName>
    <alternativeName>
        <fullName evidence="1">RNA polymerase subunit beta'</fullName>
    </alternativeName>
    <alternativeName>
        <fullName evidence="1">Transcriptase subunit beta'</fullName>
    </alternativeName>
</protein>
<comment type="function">
    <text evidence="1">DNA-dependent RNA polymerase catalyzes the transcription of DNA into RNA using the four ribonucleoside triphosphates as substrates.</text>
</comment>
<comment type="catalytic activity">
    <reaction evidence="1">
        <text>RNA(n) + a ribonucleoside 5'-triphosphate = RNA(n+1) + diphosphate</text>
        <dbReference type="Rhea" id="RHEA:21248"/>
        <dbReference type="Rhea" id="RHEA-COMP:14527"/>
        <dbReference type="Rhea" id="RHEA-COMP:17342"/>
        <dbReference type="ChEBI" id="CHEBI:33019"/>
        <dbReference type="ChEBI" id="CHEBI:61557"/>
        <dbReference type="ChEBI" id="CHEBI:140395"/>
        <dbReference type="EC" id="2.7.7.6"/>
    </reaction>
</comment>
<comment type="cofactor">
    <cofactor evidence="1">
        <name>Mg(2+)</name>
        <dbReference type="ChEBI" id="CHEBI:18420"/>
    </cofactor>
    <text evidence="1">Binds 1 Mg(2+) ion per subunit.</text>
</comment>
<comment type="cofactor">
    <cofactor evidence="1">
        <name>Zn(2+)</name>
        <dbReference type="ChEBI" id="CHEBI:29105"/>
    </cofactor>
    <text evidence="1">Binds 2 Zn(2+) ions per subunit.</text>
</comment>
<comment type="subunit">
    <text evidence="1">The RNAP catalytic core consists of 2 alpha, 1 beta, 1 beta' and 1 omega subunit. When a sigma factor is associated with the core the holoenzyme is formed, which can initiate transcription.</text>
</comment>
<comment type="similarity">
    <text evidence="1">Belongs to the RNA polymerase beta' chain family.</text>
</comment>
<evidence type="ECO:0000255" key="1">
    <source>
        <dbReference type="HAMAP-Rule" id="MF_01322"/>
    </source>
</evidence>
<reference key="1">
    <citation type="journal article" date="2008" name="J. Bacteriol.">
        <title>Genome sequence of Lactobacillus helveticus: an organism distinguished by selective gene loss and IS element expansion.</title>
        <authorList>
            <person name="Callanan M."/>
            <person name="Kaleta P."/>
            <person name="O'Callaghan J."/>
            <person name="O'Sullivan O."/>
            <person name="Jordan K."/>
            <person name="McAuliffe O."/>
            <person name="Sangrador-Vegas A."/>
            <person name="Slattery L."/>
            <person name="Fitzgerald G.F."/>
            <person name="Beresford T."/>
            <person name="Ross R.P."/>
        </authorList>
    </citation>
    <scope>NUCLEOTIDE SEQUENCE [LARGE SCALE GENOMIC DNA]</scope>
    <source>
        <strain>DPC 4571</strain>
    </source>
</reference>
<keyword id="KW-0240">DNA-directed RNA polymerase</keyword>
<keyword id="KW-0460">Magnesium</keyword>
<keyword id="KW-0479">Metal-binding</keyword>
<keyword id="KW-0548">Nucleotidyltransferase</keyword>
<keyword id="KW-0804">Transcription</keyword>
<keyword id="KW-0808">Transferase</keyword>
<keyword id="KW-0862">Zinc</keyword>
<accession>A8YXJ9</accession>
<feature type="chain" id="PRO_1000073243" description="DNA-directed RNA polymerase subunit beta'">
    <location>
        <begin position="1"/>
        <end position="1217"/>
    </location>
</feature>
<feature type="binding site" evidence="1">
    <location>
        <position position="60"/>
    </location>
    <ligand>
        <name>Zn(2+)</name>
        <dbReference type="ChEBI" id="CHEBI:29105"/>
        <label>1</label>
    </ligand>
</feature>
<feature type="binding site" evidence="1">
    <location>
        <position position="62"/>
    </location>
    <ligand>
        <name>Zn(2+)</name>
        <dbReference type="ChEBI" id="CHEBI:29105"/>
        <label>1</label>
    </ligand>
</feature>
<feature type="binding site" evidence="1">
    <location>
        <position position="75"/>
    </location>
    <ligand>
        <name>Zn(2+)</name>
        <dbReference type="ChEBI" id="CHEBI:29105"/>
        <label>1</label>
    </ligand>
</feature>
<feature type="binding site" evidence="1">
    <location>
        <position position="78"/>
    </location>
    <ligand>
        <name>Zn(2+)</name>
        <dbReference type="ChEBI" id="CHEBI:29105"/>
        <label>1</label>
    </ligand>
</feature>
<feature type="binding site" evidence="1">
    <location>
        <position position="449"/>
    </location>
    <ligand>
        <name>Mg(2+)</name>
        <dbReference type="ChEBI" id="CHEBI:18420"/>
    </ligand>
</feature>
<feature type="binding site" evidence="1">
    <location>
        <position position="451"/>
    </location>
    <ligand>
        <name>Mg(2+)</name>
        <dbReference type="ChEBI" id="CHEBI:18420"/>
    </ligand>
</feature>
<feature type="binding site" evidence="1">
    <location>
        <position position="453"/>
    </location>
    <ligand>
        <name>Mg(2+)</name>
        <dbReference type="ChEBI" id="CHEBI:18420"/>
    </ligand>
</feature>
<feature type="binding site" evidence="1">
    <location>
        <position position="821"/>
    </location>
    <ligand>
        <name>Zn(2+)</name>
        <dbReference type="ChEBI" id="CHEBI:29105"/>
        <label>2</label>
    </ligand>
</feature>
<feature type="binding site" evidence="1">
    <location>
        <position position="895"/>
    </location>
    <ligand>
        <name>Zn(2+)</name>
        <dbReference type="ChEBI" id="CHEBI:29105"/>
        <label>2</label>
    </ligand>
</feature>
<feature type="binding site" evidence="1">
    <location>
        <position position="902"/>
    </location>
    <ligand>
        <name>Zn(2+)</name>
        <dbReference type="ChEBI" id="CHEBI:29105"/>
        <label>2</label>
    </ligand>
</feature>
<feature type="binding site" evidence="1">
    <location>
        <position position="905"/>
    </location>
    <ligand>
        <name>Zn(2+)</name>
        <dbReference type="ChEBI" id="CHEBI:29105"/>
        <label>2</label>
    </ligand>
</feature>
<dbReference type="EC" id="2.7.7.6" evidence="1"/>
<dbReference type="EMBL" id="CP000517">
    <property type="protein sequence ID" value="ABX26530.1"/>
    <property type="molecule type" value="Genomic_DNA"/>
</dbReference>
<dbReference type="RefSeq" id="WP_012211373.1">
    <property type="nucleotide sequence ID" value="NC_010080.1"/>
</dbReference>
<dbReference type="SMR" id="A8YXJ9"/>
<dbReference type="KEGG" id="lhe:lhv_0303"/>
<dbReference type="eggNOG" id="COG0086">
    <property type="taxonomic scope" value="Bacteria"/>
</dbReference>
<dbReference type="HOGENOM" id="CLU_000524_3_1_9"/>
<dbReference type="Proteomes" id="UP000000790">
    <property type="component" value="Chromosome"/>
</dbReference>
<dbReference type="GO" id="GO:0000428">
    <property type="term" value="C:DNA-directed RNA polymerase complex"/>
    <property type="evidence" value="ECO:0007669"/>
    <property type="project" value="UniProtKB-KW"/>
</dbReference>
<dbReference type="GO" id="GO:0003677">
    <property type="term" value="F:DNA binding"/>
    <property type="evidence" value="ECO:0007669"/>
    <property type="project" value="UniProtKB-UniRule"/>
</dbReference>
<dbReference type="GO" id="GO:0003899">
    <property type="term" value="F:DNA-directed RNA polymerase activity"/>
    <property type="evidence" value="ECO:0007669"/>
    <property type="project" value="UniProtKB-UniRule"/>
</dbReference>
<dbReference type="GO" id="GO:0000287">
    <property type="term" value="F:magnesium ion binding"/>
    <property type="evidence" value="ECO:0007669"/>
    <property type="project" value="UniProtKB-UniRule"/>
</dbReference>
<dbReference type="GO" id="GO:0008270">
    <property type="term" value="F:zinc ion binding"/>
    <property type="evidence" value="ECO:0007669"/>
    <property type="project" value="UniProtKB-UniRule"/>
</dbReference>
<dbReference type="GO" id="GO:0006351">
    <property type="term" value="P:DNA-templated transcription"/>
    <property type="evidence" value="ECO:0007669"/>
    <property type="project" value="UniProtKB-UniRule"/>
</dbReference>
<dbReference type="CDD" id="cd02655">
    <property type="entry name" value="RNAP_beta'_C"/>
    <property type="match status" value="1"/>
</dbReference>
<dbReference type="CDD" id="cd01609">
    <property type="entry name" value="RNAP_beta'_N"/>
    <property type="match status" value="1"/>
</dbReference>
<dbReference type="FunFam" id="4.10.860.120:FF:000001">
    <property type="entry name" value="DNA-directed RNA polymerase subunit beta"/>
    <property type="match status" value="1"/>
</dbReference>
<dbReference type="Gene3D" id="1.10.132.30">
    <property type="match status" value="1"/>
</dbReference>
<dbReference type="Gene3D" id="1.10.150.390">
    <property type="match status" value="1"/>
</dbReference>
<dbReference type="Gene3D" id="1.10.1790.20">
    <property type="match status" value="1"/>
</dbReference>
<dbReference type="Gene3D" id="1.10.40.90">
    <property type="match status" value="1"/>
</dbReference>
<dbReference type="Gene3D" id="2.40.40.20">
    <property type="match status" value="1"/>
</dbReference>
<dbReference type="Gene3D" id="2.40.50.100">
    <property type="match status" value="1"/>
</dbReference>
<dbReference type="Gene3D" id="4.10.860.120">
    <property type="entry name" value="RNA polymerase II, clamp domain"/>
    <property type="match status" value="1"/>
</dbReference>
<dbReference type="Gene3D" id="1.10.274.100">
    <property type="entry name" value="RNA polymerase Rpb1, domain 3"/>
    <property type="match status" value="2"/>
</dbReference>
<dbReference type="HAMAP" id="MF_01322">
    <property type="entry name" value="RNApol_bact_RpoC"/>
    <property type="match status" value="1"/>
</dbReference>
<dbReference type="InterPro" id="IPR045867">
    <property type="entry name" value="DNA-dir_RpoC_beta_prime"/>
</dbReference>
<dbReference type="InterPro" id="IPR012754">
    <property type="entry name" value="DNA-dir_RpoC_beta_prime_bact"/>
</dbReference>
<dbReference type="InterPro" id="IPR000722">
    <property type="entry name" value="RNA_pol_asu"/>
</dbReference>
<dbReference type="InterPro" id="IPR006592">
    <property type="entry name" value="RNA_pol_N"/>
</dbReference>
<dbReference type="InterPro" id="IPR007080">
    <property type="entry name" value="RNA_pol_Rpb1_1"/>
</dbReference>
<dbReference type="InterPro" id="IPR007066">
    <property type="entry name" value="RNA_pol_Rpb1_3"/>
</dbReference>
<dbReference type="InterPro" id="IPR042102">
    <property type="entry name" value="RNA_pol_Rpb1_3_sf"/>
</dbReference>
<dbReference type="InterPro" id="IPR007083">
    <property type="entry name" value="RNA_pol_Rpb1_4"/>
</dbReference>
<dbReference type="InterPro" id="IPR007081">
    <property type="entry name" value="RNA_pol_Rpb1_5"/>
</dbReference>
<dbReference type="InterPro" id="IPR044893">
    <property type="entry name" value="RNA_pol_Rpb1_clamp_domain"/>
</dbReference>
<dbReference type="InterPro" id="IPR038120">
    <property type="entry name" value="Rpb1_funnel_sf"/>
</dbReference>
<dbReference type="NCBIfam" id="TIGR02386">
    <property type="entry name" value="rpoC_TIGR"/>
    <property type="match status" value="1"/>
</dbReference>
<dbReference type="PANTHER" id="PTHR19376">
    <property type="entry name" value="DNA-DIRECTED RNA POLYMERASE"/>
    <property type="match status" value="1"/>
</dbReference>
<dbReference type="PANTHER" id="PTHR19376:SF54">
    <property type="entry name" value="DNA-DIRECTED RNA POLYMERASE SUBUNIT BETA"/>
    <property type="match status" value="1"/>
</dbReference>
<dbReference type="Pfam" id="PF04997">
    <property type="entry name" value="RNA_pol_Rpb1_1"/>
    <property type="match status" value="1"/>
</dbReference>
<dbReference type="Pfam" id="PF00623">
    <property type="entry name" value="RNA_pol_Rpb1_2"/>
    <property type="match status" value="2"/>
</dbReference>
<dbReference type="Pfam" id="PF04983">
    <property type="entry name" value="RNA_pol_Rpb1_3"/>
    <property type="match status" value="1"/>
</dbReference>
<dbReference type="Pfam" id="PF05000">
    <property type="entry name" value="RNA_pol_Rpb1_4"/>
    <property type="match status" value="1"/>
</dbReference>
<dbReference type="Pfam" id="PF04998">
    <property type="entry name" value="RNA_pol_Rpb1_5"/>
    <property type="match status" value="1"/>
</dbReference>
<dbReference type="SMART" id="SM00663">
    <property type="entry name" value="RPOLA_N"/>
    <property type="match status" value="1"/>
</dbReference>
<dbReference type="SUPFAM" id="SSF64484">
    <property type="entry name" value="beta and beta-prime subunits of DNA dependent RNA-polymerase"/>
    <property type="match status" value="1"/>
</dbReference>